<proteinExistence type="inferred from homology"/>
<comment type="function">
    <text evidence="1">Formation of pseudouridine at positions 38, 39 and 40 in the anticodon stem and loop of transfer RNAs.</text>
</comment>
<comment type="catalytic activity">
    <reaction evidence="1">
        <text>uridine(38/39/40) in tRNA = pseudouridine(38/39/40) in tRNA</text>
        <dbReference type="Rhea" id="RHEA:22376"/>
        <dbReference type="Rhea" id="RHEA-COMP:10085"/>
        <dbReference type="Rhea" id="RHEA-COMP:10087"/>
        <dbReference type="ChEBI" id="CHEBI:65314"/>
        <dbReference type="ChEBI" id="CHEBI:65315"/>
        <dbReference type="EC" id="5.4.99.12"/>
    </reaction>
</comment>
<comment type="subunit">
    <text evidence="1">Homodimer.</text>
</comment>
<comment type="similarity">
    <text evidence="1">Belongs to the tRNA pseudouridine synthase TruA family.</text>
</comment>
<dbReference type="EC" id="5.4.99.12" evidence="1"/>
<dbReference type="EMBL" id="CP001217">
    <property type="protein sequence ID" value="ACJ08211.1"/>
    <property type="molecule type" value="Genomic_DNA"/>
</dbReference>
<dbReference type="SMR" id="B6JMT3"/>
<dbReference type="KEGG" id="hpp:HPP12_1059"/>
<dbReference type="HOGENOM" id="CLU_014673_0_1_7"/>
<dbReference type="Proteomes" id="UP000008198">
    <property type="component" value="Chromosome"/>
</dbReference>
<dbReference type="GO" id="GO:0003723">
    <property type="term" value="F:RNA binding"/>
    <property type="evidence" value="ECO:0007669"/>
    <property type="project" value="InterPro"/>
</dbReference>
<dbReference type="GO" id="GO:0160147">
    <property type="term" value="F:tRNA pseudouridine(38-40) synthase activity"/>
    <property type="evidence" value="ECO:0007669"/>
    <property type="project" value="UniProtKB-EC"/>
</dbReference>
<dbReference type="GO" id="GO:0031119">
    <property type="term" value="P:tRNA pseudouridine synthesis"/>
    <property type="evidence" value="ECO:0007669"/>
    <property type="project" value="UniProtKB-UniRule"/>
</dbReference>
<dbReference type="CDD" id="cd02570">
    <property type="entry name" value="PseudoU_synth_EcTruA"/>
    <property type="match status" value="1"/>
</dbReference>
<dbReference type="FunFam" id="3.30.70.580:FF:000023">
    <property type="entry name" value="tRNA pseudouridine synthase A"/>
    <property type="match status" value="1"/>
</dbReference>
<dbReference type="Gene3D" id="3.30.70.660">
    <property type="entry name" value="Pseudouridine synthase I, catalytic domain, C-terminal subdomain"/>
    <property type="match status" value="1"/>
</dbReference>
<dbReference type="Gene3D" id="3.30.70.580">
    <property type="entry name" value="Pseudouridine synthase I, catalytic domain, N-terminal subdomain"/>
    <property type="match status" value="1"/>
</dbReference>
<dbReference type="HAMAP" id="MF_00171">
    <property type="entry name" value="TruA"/>
    <property type="match status" value="1"/>
</dbReference>
<dbReference type="InterPro" id="IPR020103">
    <property type="entry name" value="PsdUridine_synth_cat_dom_sf"/>
</dbReference>
<dbReference type="InterPro" id="IPR001406">
    <property type="entry name" value="PsdUridine_synth_TruA"/>
</dbReference>
<dbReference type="InterPro" id="IPR020097">
    <property type="entry name" value="PsdUridine_synth_TruA_a/b_dom"/>
</dbReference>
<dbReference type="InterPro" id="IPR020095">
    <property type="entry name" value="PsdUridine_synth_TruA_C"/>
</dbReference>
<dbReference type="InterPro" id="IPR020094">
    <property type="entry name" value="TruA/RsuA/RluB/E/F_N"/>
</dbReference>
<dbReference type="NCBIfam" id="TIGR00071">
    <property type="entry name" value="hisT_truA"/>
    <property type="match status" value="1"/>
</dbReference>
<dbReference type="PANTHER" id="PTHR11142">
    <property type="entry name" value="PSEUDOURIDYLATE SYNTHASE"/>
    <property type="match status" value="1"/>
</dbReference>
<dbReference type="PANTHER" id="PTHR11142:SF0">
    <property type="entry name" value="TRNA PSEUDOURIDINE SYNTHASE-LIKE 1"/>
    <property type="match status" value="1"/>
</dbReference>
<dbReference type="Pfam" id="PF01416">
    <property type="entry name" value="PseudoU_synth_1"/>
    <property type="match status" value="2"/>
</dbReference>
<dbReference type="PIRSF" id="PIRSF001430">
    <property type="entry name" value="tRNA_psdUrid_synth"/>
    <property type="match status" value="1"/>
</dbReference>
<dbReference type="SUPFAM" id="SSF55120">
    <property type="entry name" value="Pseudouridine synthase"/>
    <property type="match status" value="1"/>
</dbReference>
<organism>
    <name type="scientific">Helicobacter pylori (strain P12)</name>
    <dbReference type="NCBI Taxonomy" id="570508"/>
    <lineage>
        <taxon>Bacteria</taxon>
        <taxon>Pseudomonadati</taxon>
        <taxon>Campylobacterota</taxon>
        <taxon>Epsilonproteobacteria</taxon>
        <taxon>Campylobacterales</taxon>
        <taxon>Helicobacteraceae</taxon>
        <taxon>Helicobacter</taxon>
    </lineage>
</organism>
<name>TRUA_HELP2</name>
<accession>B6JMT3</accession>
<gene>
    <name evidence="1" type="primary">truA</name>
    <name type="ordered locus">HPP12_1059</name>
</gene>
<protein>
    <recommendedName>
        <fullName evidence="1">tRNA pseudouridine synthase A</fullName>
        <ecNumber evidence="1">5.4.99.12</ecNumber>
    </recommendedName>
    <alternativeName>
        <fullName evidence="1">tRNA pseudouridine(38-40) synthase</fullName>
    </alternativeName>
    <alternativeName>
        <fullName evidence="1">tRNA pseudouridylate synthase I</fullName>
    </alternativeName>
    <alternativeName>
        <fullName evidence="1">tRNA-uridine isomerase I</fullName>
    </alternativeName>
</protein>
<evidence type="ECO:0000255" key="1">
    <source>
        <dbReference type="HAMAP-Rule" id="MF_00171"/>
    </source>
</evidence>
<feature type="chain" id="PRO_1000097747" description="tRNA pseudouridine synthase A">
    <location>
        <begin position="1"/>
        <end position="242"/>
    </location>
</feature>
<feature type="active site" description="Nucleophile" evidence="1">
    <location>
        <position position="51"/>
    </location>
</feature>
<feature type="binding site" evidence="1">
    <location>
        <position position="107"/>
    </location>
    <ligand>
        <name>substrate</name>
    </ligand>
</feature>
<keyword id="KW-0413">Isomerase</keyword>
<keyword id="KW-0819">tRNA processing</keyword>
<sequence length="242" mass="27346">MRCFKATIAYDGAYFLGYAKQPNKLGVQDKIESALNALGIKSAVIAAGRTDKGVHANNQVLSFHAPKHWSADKLFYYLAPKLAPHIVLKKLEEKNFHARFDAQKRAYRYLLTKNLKTPFLAPYIACGDYGSLDLLNTALKQFTGKHDFSLFKKEGGATTNPNRIIFNAFAYTTFIMGHECVVFKIIGDAFLRSSVRLIIQACVQYSLEKITLAEIQMQIHNLKATIRTPIMANGLYLHRVYY</sequence>
<reference key="1">
    <citation type="submission" date="2008-10" db="EMBL/GenBank/DDBJ databases">
        <title>The complete genome sequence of Helicobacter pylori strain P12.</title>
        <authorList>
            <person name="Fischer W."/>
            <person name="Windhager L."/>
            <person name="Karnholz A."/>
            <person name="Zeiller M."/>
            <person name="Zimmer R."/>
            <person name="Haas R."/>
        </authorList>
    </citation>
    <scope>NUCLEOTIDE SEQUENCE [LARGE SCALE GENOMIC DNA]</scope>
    <source>
        <strain>P12</strain>
    </source>
</reference>